<dbReference type="EC" id="3.1.11.6" evidence="1"/>
<dbReference type="EMBL" id="CP000539">
    <property type="protein sequence ID" value="ABM41272.1"/>
    <property type="molecule type" value="Genomic_DNA"/>
</dbReference>
<dbReference type="SMR" id="A1W4U7"/>
<dbReference type="STRING" id="232721.Ajs_1036"/>
<dbReference type="KEGG" id="ajs:Ajs_1036"/>
<dbReference type="eggNOG" id="COG1722">
    <property type="taxonomic scope" value="Bacteria"/>
</dbReference>
<dbReference type="HOGENOM" id="CLU_145918_2_0_4"/>
<dbReference type="Proteomes" id="UP000000645">
    <property type="component" value="Chromosome"/>
</dbReference>
<dbReference type="GO" id="GO:0005829">
    <property type="term" value="C:cytosol"/>
    <property type="evidence" value="ECO:0007669"/>
    <property type="project" value="TreeGrafter"/>
</dbReference>
<dbReference type="GO" id="GO:0009318">
    <property type="term" value="C:exodeoxyribonuclease VII complex"/>
    <property type="evidence" value="ECO:0007669"/>
    <property type="project" value="InterPro"/>
</dbReference>
<dbReference type="GO" id="GO:0008855">
    <property type="term" value="F:exodeoxyribonuclease VII activity"/>
    <property type="evidence" value="ECO:0007669"/>
    <property type="project" value="UniProtKB-UniRule"/>
</dbReference>
<dbReference type="GO" id="GO:0006308">
    <property type="term" value="P:DNA catabolic process"/>
    <property type="evidence" value="ECO:0007669"/>
    <property type="project" value="UniProtKB-UniRule"/>
</dbReference>
<dbReference type="Gene3D" id="1.10.287.1040">
    <property type="entry name" value="Exonuclease VII, small subunit"/>
    <property type="match status" value="1"/>
</dbReference>
<dbReference type="HAMAP" id="MF_00337">
    <property type="entry name" value="Exonuc_7_S"/>
    <property type="match status" value="1"/>
</dbReference>
<dbReference type="InterPro" id="IPR003761">
    <property type="entry name" value="Exonuc_VII_S"/>
</dbReference>
<dbReference type="InterPro" id="IPR037004">
    <property type="entry name" value="Exonuc_VII_ssu_sf"/>
</dbReference>
<dbReference type="NCBIfam" id="TIGR01280">
    <property type="entry name" value="xseB"/>
    <property type="match status" value="1"/>
</dbReference>
<dbReference type="PANTHER" id="PTHR34137">
    <property type="entry name" value="EXODEOXYRIBONUCLEASE 7 SMALL SUBUNIT"/>
    <property type="match status" value="1"/>
</dbReference>
<dbReference type="PANTHER" id="PTHR34137:SF1">
    <property type="entry name" value="EXODEOXYRIBONUCLEASE 7 SMALL SUBUNIT"/>
    <property type="match status" value="1"/>
</dbReference>
<dbReference type="Pfam" id="PF02609">
    <property type="entry name" value="Exonuc_VII_S"/>
    <property type="match status" value="1"/>
</dbReference>
<dbReference type="SUPFAM" id="SSF116842">
    <property type="entry name" value="XseB-like"/>
    <property type="match status" value="1"/>
</dbReference>
<reference key="1">
    <citation type="submission" date="2006-12" db="EMBL/GenBank/DDBJ databases">
        <title>Complete sequence of chromosome 1 of Acidovorax sp. JS42.</title>
        <authorList>
            <person name="Copeland A."/>
            <person name="Lucas S."/>
            <person name="Lapidus A."/>
            <person name="Barry K."/>
            <person name="Detter J.C."/>
            <person name="Glavina del Rio T."/>
            <person name="Dalin E."/>
            <person name="Tice H."/>
            <person name="Pitluck S."/>
            <person name="Chertkov O."/>
            <person name="Brettin T."/>
            <person name="Bruce D."/>
            <person name="Han C."/>
            <person name="Tapia R."/>
            <person name="Gilna P."/>
            <person name="Schmutz J."/>
            <person name="Larimer F."/>
            <person name="Land M."/>
            <person name="Hauser L."/>
            <person name="Kyrpides N."/>
            <person name="Kim E."/>
            <person name="Stahl D."/>
            <person name="Richardson P."/>
        </authorList>
    </citation>
    <scope>NUCLEOTIDE SEQUENCE [LARGE SCALE GENOMIC DNA]</scope>
    <source>
        <strain>JS42</strain>
    </source>
</reference>
<comment type="function">
    <text evidence="1">Bidirectionally degrades single-stranded DNA into large acid-insoluble oligonucleotides, which are then degraded further into small acid-soluble oligonucleotides.</text>
</comment>
<comment type="catalytic activity">
    <reaction evidence="1">
        <text>Exonucleolytic cleavage in either 5'- to 3'- or 3'- to 5'-direction to yield nucleoside 5'-phosphates.</text>
        <dbReference type="EC" id="3.1.11.6"/>
    </reaction>
</comment>
<comment type="subunit">
    <text evidence="1">Heterooligomer composed of large and small subunits.</text>
</comment>
<comment type="subcellular location">
    <subcellularLocation>
        <location evidence="1">Cytoplasm</location>
    </subcellularLocation>
</comment>
<comment type="similarity">
    <text evidence="1">Belongs to the XseB family.</text>
</comment>
<proteinExistence type="inferred from homology"/>
<evidence type="ECO:0000255" key="1">
    <source>
        <dbReference type="HAMAP-Rule" id="MF_00337"/>
    </source>
</evidence>
<evidence type="ECO:0000256" key="2">
    <source>
        <dbReference type="SAM" id="MobiDB-lite"/>
    </source>
</evidence>
<protein>
    <recommendedName>
        <fullName evidence="1">Exodeoxyribonuclease 7 small subunit</fullName>
        <ecNumber evidence="1">3.1.11.6</ecNumber>
    </recommendedName>
    <alternativeName>
        <fullName evidence="1">Exodeoxyribonuclease VII small subunit</fullName>
        <shortName evidence="1">Exonuclease VII small subunit</shortName>
    </alternativeName>
</protein>
<name>EX7S_ACISJ</name>
<sequence length="89" mass="9866">MRPWRCVSMAKAPAAPSSTQPDPVSYEAALEELEQLVGRIESGQLPLDQMLAGYQRGAVLLNFCRARLEAVQDQIKVLDEGALQPWVQE</sequence>
<keyword id="KW-0963">Cytoplasm</keyword>
<keyword id="KW-0269">Exonuclease</keyword>
<keyword id="KW-0378">Hydrolase</keyword>
<keyword id="KW-0540">Nuclease</keyword>
<feature type="chain" id="PRO_1000205215" description="Exodeoxyribonuclease 7 small subunit">
    <location>
        <begin position="1"/>
        <end position="89"/>
    </location>
</feature>
<feature type="region of interest" description="Disordered" evidence="2">
    <location>
        <begin position="1"/>
        <end position="23"/>
    </location>
</feature>
<gene>
    <name evidence="1" type="primary">xseB</name>
    <name type="ordered locus">Ajs_1036</name>
</gene>
<accession>A1W4U7</accession>
<organism>
    <name type="scientific">Acidovorax sp. (strain JS42)</name>
    <dbReference type="NCBI Taxonomy" id="232721"/>
    <lineage>
        <taxon>Bacteria</taxon>
        <taxon>Pseudomonadati</taxon>
        <taxon>Pseudomonadota</taxon>
        <taxon>Betaproteobacteria</taxon>
        <taxon>Burkholderiales</taxon>
        <taxon>Comamonadaceae</taxon>
        <taxon>Acidovorax</taxon>
    </lineage>
</organism>